<protein>
    <recommendedName>
        <fullName evidence="2">Succinate dehydrogenase assembly factor 2-B, mitochondrial</fullName>
        <shortName evidence="2">SDH assembly factor 2-B</shortName>
        <shortName evidence="2">SDHAF2-B</shortName>
    </recommendedName>
</protein>
<name>SDF2B_DROYA</name>
<feature type="transit peptide" description="Mitochondrion" evidence="1">
    <location>
        <begin position="1"/>
        <end position="24"/>
    </location>
</feature>
<feature type="chain" id="PRO_0000383183" description="Succinate dehydrogenase assembly factor 2-B, mitochondrial">
    <location>
        <begin position="25"/>
        <end position="156"/>
    </location>
</feature>
<gene>
    <name type="ORF">GE21507</name>
</gene>
<sequence>MLRQFIISTVGRRQPLLMILQSRLASNLDKTEYTTPGEIVDYDDPPHLPVPEYPVRPDEPLETRKQRLLYQSRKRGMLENDLLLSTFVAKYLKDFSAEQTAEYDQLINGVSNDWDIFYWATDTKPTPPQFDTEIMRLLKEHVKNHEKVQRIRQPDL</sequence>
<comment type="function">
    <text evidence="2">Plays an essential role in the assembly of succinate dehydrogenase (SDH), an enzyme complex (also referred to as respiratory complex II) that is a component of both the tricarboxylic acid (TCA) cycle and the mitochondrial electron transport chain, and which couples the oxidation of succinate to fumarate with the reduction of ubiquinone (coenzyme Q) to ubiquinol. Required for flavinylation (covalent attachment of FAD) of the flavoprotein subunit of the SDH catalytic dimer.</text>
</comment>
<comment type="subunit">
    <text evidence="2">Interacts with the flavoprotein subunit within the SDH catalytic dimer.</text>
</comment>
<comment type="subcellular location">
    <subcellularLocation>
        <location evidence="2">Mitochondrion matrix</location>
    </subcellularLocation>
</comment>
<comment type="similarity">
    <text evidence="2">Belongs to the SDHAF2 family.</text>
</comment>
<proteinExistence type="inferred from homology"/>
<evidence type="ECO:0000255" key="1"/>
<evidence type="ECO:0000255" key="2">
    <source>
        <dbReference type="HAMAP-Rule" id="MF_03057"/>
    </source>
</evidence>
<accession>B4NXN5</accession>
<dbReference type="EMBL" id="CM000157">
    <property type="protein sequence ID" value="EDW89660.1"/>
    <property type="molecule type" value="Genomic_DNA"/>
</dbReference>
<dbReference type="SMR" id="B4NXN5"/>
<dbReference type="EnsemblMetazoa" id="FBtr0268025">
    <property type="protein sequence ID" value="FBpp0266517"/>
    <property type="gene ID" value="FBgn0238764"/>
</dbReference>
<dbReference type="EnsemblMetazoa" id="XM_002089912.3">
    <property type="protein sequence ID" value="XP_002089948.1"/>
    <property type="gene ID" value="LOC6528916"/>
</dbReference>
<dbReference type="GeneID" id="6528916"/>
<dbReference type="KEGG" id="dya:Dyak_GE21507"/>
<dbReference type="eggNOG" id="KOG3326">
    <property type="taxonomic scope" value="Eukaryota"/>
</dbReference>
<dbReference type="HOGENOM" id="CLU_103054_0_3_1"/>
<dbReference type="OMA" id="DTEIMRM"/>
<dbReference type="OrthoDB" id="284292at2759"/>
<dbReference type="PhylomeDB" id="B4NXN5"/>
<dbReference type="Proteomes" id="UP000002282">
    <property type="component" value="Chromosome 2L"/>
</dbReference>
<dbReference type="GO" id="GO:0005759">
    <property type="term" value="C:mitochondrial matrix"/>
    <property type="evidence" value="ECO:0007669"/>
    <property type="project" value="UniProtKB-SubCell"/>
</dbReference>
<dbReference type="GO" id="GO:0005739">
    <property type="term" value="C:mitochondrion"/>
    <property type="evidence" value="ECO:0000250"/>
    <property type="project" value="UniProtKB"/>
</dbReference>
<dbReference type="GO" id="GO:0006121">
    <property type="term" value="P:mitochondrial electron transport, succinate to ubiquinone"/>
    <property type="evidence" value="ECO:0000250"/>
    <property type="project" value="UniProtKB"/>
</dbReference>
<dbReference type="GO" id="GO:0034553">
    <property type="term" value="P:mitochondrial respiratory chain complex II assembly"/>
    <property type="evidence" value="ECO:0007669"/>
    <property type="project" value="TreeGrafter"/>
</dbReference>
<dbReference type="GO" id="GO:0018293">
    <property type="term" value="P:protein-FAD linkage"/>
    <property type="evidence" value="ECO:0000250"/>
    <property type="project" value="UniProtKB"/>
</dbReference>
<dbReference type="GO" id="GO:0006099">
    <property type="term" value="P:tricarboxylic acid cycle"/>
    <property type="evidence" value="ECO:0007669"/>
    <property type="project" value="TreeGrafter"/>
</dbReference>
<dbReference type="FunFam" id="1.10.150.250:FF:000002">
    <property type="entry name" value="Succinate dehydrogenase assembly factor 2, mitochondrial"/>
    <property type="match status" value="1"/>
</dbReference>
<dbReference type="Gene3D" id="1.10.150.250">
    <property type="entry name" value="Flavinator of succinate dehydrogenase"/>
    <property type="match status" value="1"/>
</dbReference>
<dbReference type="HAMAP" id="MF_03057">
    <property type="entry name" value="SDHAF2"/>
    <property type="match status" value="1"/>
</dbReference>
<dbReference type="InterPro" id="IPR005631">
    <property type="entry name" value="SDH"/>
</dbReference>
<dbReference type="InterPro" id="IPR036714">
    <property type="entry name" value="SDH_sf"/>
</dbReference>
<dbReference type="InterPro" id="IPR028882">
    <property type="entry name" value="SDHAF2"/>
</dbReference>
<dbReference type="PANTHER" id="PTHR12469">
    <property type="entry name" value="PROTEIN EMI5 HOMOLOG, MITOCHONDRIAL"/>
    <property type="match status" value="1"/>
</dbReference>
<dbReference type="PANTHER" id="PTHR12469:SF2">
    <property type="entry name" value="SUCCINATE DEHYDROGENASE ASSEMBLY FACTOR 2, MITOCHONDRIAL"/>
    <property type="match status" value="1"/>
</dbReference>
<dbReference type="Pfam" id="PF03937">
    <property type="entry name" value="Sdh5"/>
    <property type="match status" value="1"/>
</dbReference>
<dbReference type="SUPFAM" id="SSF109910">
    <property type="entry name" value="YgfY-like"/>
    <property type="match status" value="1"/>
</dbReference>
<organism>
    <name type="scientific">Drosophila yakuba</name>
    <name type="common">Fruit fly</name>
    <dbReference type="NCBI Taxonomy" id="7245"/>
    <lineage>
        <taxon>Eukaryota</taxon>
        <taxon>Metazoa</taxon>
        <taxon>Ecdysozoa</taxon>
        <taxon>Arthropoda</taxon>
        <taxon>Hexapoda</taxon>
        <taxon>Insecta</taxon>
        <taxon>Pterygota</taxon>
        <taxon>Neoptera</taxon>
        <taxon>Endopterygota</taxon>
        <taxon>Diptera</taxon>
        <taxon>Brachycera</taxon>
        <taxon>Muscomorpha</taxon>
        <taxon>Ephydroidea</taxon>
        <taxon>Drosophilidae</taxon>
        <taxon>Drosophila</taxon>
        <taxon>Sophophora</taxon>
    </lineage>
</organism>
<reference key="1">
    <citation type="journal article" date="2007" name="Nature">
        <title>Evolution of genes and genomes on the Drosophila phylogeny.</title>
        <authorList>
            <consortium name="Drosophila 12 genomes consortium"/>
        </authorList>
    </citation>
    <scope>NUCLEOTIDE SEQUENCE [LARGE SCALE GENOMIC DNA]</scope>
    <source>
        <strain>Tai18E2 / Tucson 14021-0261.01</strain>
    </source>
</reference>
<keyword id="KW-0143">Chaperone</keyword>
<keyword id="KW-0496">Mitochondrion</keyword>
<keyword id="KW-0809">Transit peptide</keyword>